<proteinExistence type="evidence at protein level"/>
<accession>P68004</accession>
<accession>P01305</accession>
<gene>
    <name type="primary">PYY</name>
</gene>
<organism>
    <name type="scientific">Canis lupus familiaris</name>
    <name type="common">Dog</name>
    <name type="synonym">Canis familiaris</name>
    <dbReference type="NCBI Taxonomy" id="9615"/>
    <lineage>
        <taxon>Eukaryota</taxon>
        <taxon>Metazoa</taxon>
        <taxon>Chordata</taxon>
        <taxon>Craniata</taxon>
        <taxon>Vertebrata</taxon>
        <taxon>Euteleostomi</taxon>
        <taxon>Mammalia</taxon>
        <taxon>Eutheria</taxon>
        <taxon>Laurasiatheria</taxon>
        <taxon>Carnivora</taxon>
        <taxon>Caniformia</taxon>
        <taxon>Canidae</taxon>
        <taxon>Canis</taxon>
    </lineage>
</organism>
<sequence>YPAKPEAPGEDASPEELSRYYASLRHYLNLVTRQRY</sequence>
<dbReference type="PIR" id="A60416">
    <property type="entry name" value="A60416"/>
</dbReference>
<dbReference type="BMRB" id="P68004"/>
<dbReference type="SMR" id="P68004"/>
<dbReference type="PaxDb" id="9612-ENSCAFP00000021232"/>
<dbReference type="eggNOG" id="ENOG502S267">
    <property type="taxonomic scope" value="Eukaryota"/>
</dbReference>
<dbReference type="InParanoid" id="P68004"/>
<dbReference type="OrthoDB" id="9852947at2759"/>
<dbReference type="Proteomes" id="UP000002254">
    <property type="component" value="Unplaced"/>
</dbReference>
<dbReference type="Proteomes" id="UP000694429">
    <property type="component" value="Unplaced"/>
</dbReference>
<dbReference type="Proteomes" id="UP000694542">
    <property type="component" value="Unplaced"/>
</dbReference>
<dbReference type="Proteomes" id="UP000805418">
    <property type="component" value="Unplaced"/>
</dbReference>
<dbReference type="GO" id="GO:0005576">
    <property type="term" value="C:extracellular region"/>
    <property type="evidence" value="ECO:0007669"/>
    <property type="project" value="UniProtKB-SubCell"/>
</dbReference>
<dbReference type="GO" id="GO:0005179">
    <property type="term" value="F:hormone activity"/>
    <property type="evidence" value="ECO:0007669"/>
    <property type="project" value="UniProtKB-KW"/>
</dbReference>
<dbReference type="GO" id="GO:0031841">
    <property type="term" value="F:neuropeptide Y receptor binding"/>
    <property type="evidence" value="ECO:0000250"/>
    <property type="project" value="AgBase"/>
</dbReference>
<dbReference type="CDD" id="cd00126">
    <property type="entry name" value="PAH"/>
    <property type="match status" value="1"/>
</dbReference>
<dbReference type="Gene3D" id="6.10.250.900">
    <property type="match status" value="1"/>
</dbReference>
<dbReference type="InterPro" id="IPR001955">
    <property type="entry name" value="Pancreatic_hormone-like"/>
</dbReference>
<dbReference type="InterPro" id="IPR020392">
    <property type="entry name" value="Pancreatic_hormone-like_CS"/>
</dbReference>
<dbReference type="PANTHER" id="PTHR10533">
    <property type="entry name" value="NEUROPEPTIDE Y/PANCREATIC HORMONE/PEPTIDE YY"/>
    <property type="match status" value="1"/>
</dbReference>
<dbReference type="PANTHER" id="PTHR10533:SF14">
    <property type="entry name" value="PEPTIDE YY-RELATED"/>
    <property type="match status" value="1"/>
</dbReference>
<dbReference type="Pfam" id="PF00159">
    <property type="entry name" value="Hormone_3"/>
    <property type="match status" value="1"/>
</dbReference>
<dbReference type="PRINTS" id="PR00278">
    <property type="entry name" value="PANCHORMONE"/>
</dbReference>
<dbReference type="SMART" id="SM00309">
    <property type="entry name" value="PAH"/>
    <property type="match status" value="1"/>
</dbReference>
<dbReference type="PROSITE" id="PS00265">
    <property type="entry name" value="PANCREATIC_HORMONE_1"/>
    <property type="match status" value="1"/>
</dbReference>
<dbReference type="PROSITE" id="PS50276">
    <property type="entry name" value="PANCREATIC_HORMONE_2"/>
    <property type="match status" value="1"/>
</dbReference>
<feature type="peptide" id="PRO_0000025382" description="Peptide YY">
    <location>
        <begin position="1"/>
        <end position="36"/>
    </location>
</feature>
<feature type="peptide" id="PRO_0000025383" description="Peptide YY(3-36)">
    <location>
        <begin position="3"/>
        <end position="36"/>
    </location>
</feature>
<feature type="site" description="Cleavage; by FAP" evidence="2">
    <location>
        <begin position="2"/>
        <end position="3"/>
    </location>
</feature>
<feature type="modified residue" description="Phosphoserine" evidence="3">
    <location>
        <position position="13"/>
    </location>
</feature>
<feature type="modified residue" description="Tyrosine amide" evidence="4">
    <location>
        <position position="36"/>
    </location>
</feature>
<evidence type="ECO:0000250" key="1"/>
<evidence type="ECO:0000250" key="2">
    <source>
        <dbReference type="UniProtKB" id="P10082"/>
    </source>
</evidence>
<evidence type="ECO:0000250" key="3">
    <source>
        <dbReference type="UniProtKB" id="P68005"/>
    </source>
</evidence>
<evidence type="ECO:0000269" key="4">
    <source>
    </source>
</evidence>
<evidence type="ECO:0000303" key="5">
    <source>
    </source>
</evidence>
<evidence type="ECO:0000305" key="6"/>
<protein>
    <recommendedName>
        <fullName evidence="5">Peptide YY</fullName>
        <shortName evidence="5">PYY</shortName>
    </recommendedName>
    <alternativeName>
        <fullName>Peptide tyrosine tyrosine</fullName>
    </alternativeName>
    <component>
        <recommendedName>
            <fullName evidence="5">Peptide YY(3-36)</fullName>
        </recommendedName>
    </component>
</protein>
<keyword id="KW-0027">Amidation</keyword>
<keyword id="KW-0903">Direct protein sequencing</keyword>
<keyword id="KW-0372">Hormone</keyword>
<keyword id="KW-0597">Phosphoprotein</keyword>
<keyword id="KW-1185">Reference proteome</keyword>
<keyword id="KW-0964">Secreted</keyword>
<name>PYY_CANLF</name>
<reference key="1">
    <citation type="journal article" date="1990" name="Peptides">
        <title>Structural characterization of canine PYY.</title>
        <authorList>
            <person name="Eysselein V.E."/>
            <person name="Eberlein G.A."/>
            <person name="Grandt D."/>
            <person name="Schaeffer M."/>
            <person name="Zehres B."/>
            <person name="Behn U."/>
            <person name="Schaefer D."/>
            <person name="Goebell H."/>
            <person name="Davis M."/>
            <person name="Lee T.D."/>
            <person name="Shively J.E."/>
            <person name="Meyer H.E."/>
            <person name="Reeve J.R. Jr."/>
        </authorList>
    </citation>
    <scope>PROTEIN SEQUENCE</scope>
    <scope>AMIDATION AT TYR-36</scope>
    <source>
        <tissue>Colon mucosa</tissue>
    </source>
</reference>
<comment type="function">
    <text evidence="1">This gut peptide inhibits exocrine pancreatic secretion, has a vasoconstrictory action and inhibitis jejunal and colonic mobility.</text>
</comment>
<comment type="subcellular location">
    <subcellularLocation>
        <location evidence="1">Secreted</location>
    </subcellularLocation>
</comment>
<comment type="PTM">
    <text evidence="2">The peptide YY form is cleaved at Pro-2 by the prolyl endopeptidase FAP (seprase) activity (in vitro) to generate peptide YY(3-36).</text>
</comment>
<comment type="similarity">
    <text evidence="6">Belongs to the NPY family.</text>
</comment>